<name>RL3_THEVB</name>
<dbReference type="EMBL" id="BA000039">
    <property type="protein sequence ID" value="BAC07634.1"/>
    <property type="molecule type" value="Genomic_DNA"/>
</dbReference>
<dbReference type="RefSeq" id="NP_680872.1">
    <property type="nucleotide sequence ID" value="NC_004113.1"/>
</dbReference>
<dbReference type="RefSeq" id="WP_011055936.1">
    <property type="nucleotide sequence ID" value="NC_004113.1"/>
</dbReference>
<dbReference type="SMR" id="Q8DMN1"/>
<dbReference type="STRING" id="197221.gene:10746659"/>
<dbReference type="EnsemblBacteria" id="BAC07634">
    <property type="protein sequence ID" value="BAC07634"/>
    <property type="gene ID" value="BAC07634"/>
</dbReference>
<dbReference type="KEGG" id="tel:tlr0081"/>
<dbReference type="PATRIC" id="fig|197221.4.peg.84"/>
<dbReference type="eggNOG" id="COG0087">
    <property type="taxonomic scope" value="Bacteria"/>
</dbReference>
<dbReference type="Proteomes" id="UP000000440">
    <property type="component" value="Chromosome"/>
</dbReference>
<dbReference type="GO" id="GO:0022625">
    <property type="term" value="C:cytosolic large ribosomal subunit"/>
    <property type="evidence" value="ECO:0007669"/>
    <property type="project" value="TreeGrafter"/>
</dbReference>
<dbReference type="GO" id="GO:0019843">
    <property type="term" value="F:rRNA binding"/>
    <property type="evidence" value="ECO:0007669"/>
    <property type="project" value="UniProtKB-UniRule"/>
</dbReference>
<dbReference type="GO" id="GO:0003735">
    <property type="term" value="F:structural constituent of ribosome"/>
    <property type="evidence" value="ECO:0007669"/>
    <property type="project" value="InterPro"/>
</dbReference>
<dbReference type="GO" id="GO:0006412">
    <property type="term" value="P:translation"/>
    <property type="evidence" value="ECO:0007669"/>
    <property type="project" value="UniProtKB-UniRule"/>
</dbReference>
<dbReference type="FunFam" id="3.30.160.810:FF:000001">
    <property type="entry name" value="50S ribosomal protein L3"/>
    <property type="match status" value="1"/>
</dbReference>
<dbReference type="FunFam" id="2.40.30.10:FF:000065">
    <property type="entry name" value="50S ribosomal protein L3, chloroplastic"/>
    <property type="match status" value="1"/>
</dbReference>
<dbReference type="Gene3D" id="3.30.160.810">
    <property type="match status" value="1"/>
</dbReference>
<dbReference type="Gene3D" id="2.40.30.10">
    <property type="entry name" value="Translation factors"/>
    <property type="match status" value="1"/>
</dbReference>
<dbReference type="HAMAP" id="MF_01325_B">
    <property type="entry name" value="Ribosomal_uL3_B"/>
    <property type="match status" value="1"/>
</dbReference>
<dbReference type="InterPro" id="IPR000597">
    <property type="entry name" value="Ribosomal_uL3"/>
</dbReference>
<dbReference type="InterPro" id="IPR019927">
    <property type="entry name" value="Ribosomal_uL3_bac/org-type"/>
</dbReference>
<dbReference type="InterPro" id="IPR019926">
    <property type="entry name" value="Ribosomal_uL3_CS"/>
</dbReference>
<dbReference type="InterPro" id="IPR009000">
    <property type="entry name" value="Transl_B-barrel_sf"/>
</dbReference>
<dbReference type="NCBIfam" id="TIGR03625">
    <property type="entry name" value="L3_bact"/>
    <property type="match status" value="1"/>
</dbReference>
<dbReference type="PANTHER" id="PTHR11229">
    <property type="entry name" value="50S RIBOSOMAL PROTEIN L3"/>
    <property type="match status" value="1"/>
</dbReference>
<dbReference type="PANTHER" id="PTHR11229:SF16">
    <property type="entry name" value="LARGE RIBOSOMAL SUBUNIT PROTEIN UL3C"/>
    <property type="match status" value="1"/>
</dbReference>
<dbReference type="Pfam" id="PF00297">
    <property type="entry name" value="Ribosomal_L3"/>
    <property type="match status" value="1"/>
</dbReference>
<dbReference type="SUPFAM" id="SSF50447">
    <property type="entry name" value="Translation proteins"/>
    <property type="match status" value="1"/>
</dbReference>
<dbReference type="PROSITE" id="PS00474">
    <property type="entry name" value="RIBOSOMAL_L3"/>
    <property type="match status" value="1"/>
</dbReference>
<sequence length="212" mass="22916">MTVGILGTKLGMTQIFDEAGRSVPITVVQAGPCPITQIKTPQTDGYTAIQVAYGEVREKNLSRPERGHLNKSQTPPMRHLREFRLEDVSAYQLGQAITVDIFSPGQLVDVRGTSIGRGFAGYQKRHNFKRGPMAHGSKNHRLPGSTGAGTTPGRVFPGKRMAGRMGNTAVTIRKLQVMRVDPERNLILIKGALPGKPGALVSITPAKVVGRK</sequence>
<evidence type="ECO:0000255" key="1">
    <source>
        <dbReference type="HAMAP-Rule" id="MF_01325"/>
    </source>
</evidence>
<evidence type="ECO:0000256" key="2">
    <source>
        <dbReference type="SAM" id="MobiDB-lite"/>
    </source>
</evidence>
<evidence type="ECO:0000305" key="3"/>
<accession>Q8DMN1</accession>
<organism>
    <name type="scientific">Thermosynechococcus vestitus (strain NIES-2133 / IAM M-273 / BP-1)</name>
    <dbReference type="NCBI Taxonomy" id="197221"/>
    <lineage>
        <taxon>Bacteria</taxon>
        <taxon>Bacillati</taxon>
        <taxon>Cyanobacteriota</taxon>
        <taxon>Cyanophyceae</taxon>
        <taxon>Acaryochloridales</taxon>
        <taxon>Thermosynechococcaceae</taxon>
        <taxon>Thermosynechococcus</taxon>
    </lineage>
</organism>
<gene>
    <name evidence="1" type="primary">rplC</name>
    <name evidence="1" type="synonym">rpl3</name>
    <name type="ordered locus">tlr0081</name>
</gene>
<protein>
    <recommendedName>
        <fullName evidence="1">Large ribosomal subunit protein uL3</fullName>
    </recommendedName>
    <alternativeName>
        <fullName evidence="3">50S ribosomal protein L3</fullName>
    </alternativeName>
</protein>
<keyword id="KW-1185">Reference proteome</keyword>
<keyword id="KW-0687">Ribonucleoprotein</keyword>
<keyword id="KW-0689">Ribosomal protein</keyword>
<keyword id="KW-0694">RNA-binding</keyword>
<keyword id="KW-0699">rRNA-binding</keyword>
<feature type="chain" id="PRO_0000077174" description="Large ribosomal subunit protein uL3">
    <location>
        <begin position="1"/>
        <end position="212"/>
    </location>
</feature>
<feature type="region of interest" description="Disordered" evidence="2">
    <location>
        <begin position="127"/>
        <end position="161"/>
    </location>
</feature>
<comment type="function">
    <text evidence="1">One of the primary rRNA binding proteins, it binds directly near the 3'-end of the 23S rRNA, where it nucleates assembly of the 50S subunit.</text>
</comment>
<comment type="subunit">
    <text evidence="1">Part of the 50S ribosomal subunit. Forms a cluster with proteins L14 and L19.</text>
</comment>
<comment type="similarity">
    <text evidence="1">Belongs to the universal ribosomal protein uL3 family.</text>
</comment>
<reference key="1">
    <citation type="journal article" date="2002" name="DNA Res.">
        <title>Complete genome structure of the thermophilic cyanobacterium Thermosynechococcus elongatus BP-1.</title>
        <authorList>
            <person name="Nakamura Y."/>
            <person name="Kaneko T."/>
            <person name="Sato S."/>
            <person name="Ikeuchi M."/>
            <person name="Katoh H."/>
            <person name="Sasamoto S."/>
            <person name="Watanabe A."/>
            <person name="Iriguchi M."/>
            <person name="Kawashima K."/>
            <person name="Kimura T."/>
            <person name="Kishida Y."/>
            <person name="Kiyokawa C."/>
            <person name="Kohara M."/>
            <person name="Matsumoto M."/>
            <person name="Matsuno A."/>
            <person name="Nakazaki N."/>
            <person name="Shimpo S."/>
            <person name="Sugimoto M."/>
            <person name="Takeuchi C."/>
            <person name="Yamada M."/>
            <person name="Tabata S."/>
        </authorList>
    </citation>
    <scope>NUCLEOTIDE SEQUENCE [LARGE SCALE GENOMIC DNA]</scope>
    <source>
        <strain>NIES-2133 / IAM M-273 / BP-1</strain>
    </source>
</reference>
<proteinExistence type="inferred from homology"/>